<evidence type="ECO:0000255" key="1">
    <source>
        <dbReference type="HAMAP-Rule" id="MF_01309"/>
    </source>
</evidence>
<evidence type="ECO:0000256" key="2">
    <source>
        <dbReference type="SAM" id="MobiDB-lite"/>
    </source>
</evidence>
<evidence type="ECO:0000305" key="3"/>
<dbReference type="EMBL" id="CP000440">
    <property type="protein sequence ID" value="ABI85833.1"/>
    <property type="molecule type" value="Genomic_DNA"/>
</dbReference>
<dbReference type="RefSeq" id="WP_006482899.1">
    <property type="nucleotide sequence ID" value="NZ_CP009798.1"/>
</dbReference>
<dbReference type="SMR" id="Q0BJ40"/>
<dbReference type="GeneID" id="98107154"/>
<dbReference type="KEGG" id="bam:Bamb_0273"/>
<dbReference type="PATRIC" id="fig|339670.21.peg.1347"/>
<dbReference type="eggNOG" id="COG0092">
    <property type="taxonomic scope" value="Bacteria"/>
</dbReference>
<dbReference type="Proteomes" id="UP000000662">
    <property type="component" value="Chromosome 1"/>
</dbReference>
<dbReference type="GO" id="GO:0022627">
    <property type="term" value="C:cytosolic small ribosomal subunit"/>
    <property type="evidence" value="ECO:0007669"/>
    <property type="project" value="TreeGrafter"/>
</dbReference>
<dbReference type="GO" id="GO:0003729">
    <property type="term" value="F:mRNA binding"/>
    <property type="evidence" value="ECO:0007669"/>
    <property type="project" value="UniProtKB-UniRule"/>
</dbReference>
<dbReference type="GO" id="GO:0019843">
    <property type="term" value="F:rRNA binding"/>
    <property type="evidence" value="ECO:0007669"/>
    <property type="project" value="UniProtKB-UniRule"/>
</dbReference>
<dbReference type="GO" id="GO:0003735">
    <property type="term" value="F:structural constituent of ribosome"/>
    <property type="evidence" value="ECO:0007669"/>
    <property type="project" value="InterPro"/>
</dbReference>
<dbReference type="GO" id="GO:0006412">
    <property type="term" value="P:translation"/>
    <property type="evidence" value="ECO:0007669"/>
    <property type="project" value="UniProtKB-UniRule"/>
</dbReference>
<dbReference type="CDD" id="cd02412">
    <property type="entry name" value="KH-II_30S_S3"/>
    <property type="match status" value="1"/>
</dbReference>
<dbReference type="FunFam" id="3.30.1140.32:FF:000006">
    <property type="entry name" value="30S ribosomal protein S3"/>
    <property type="match status" value="1"/>
</dbReference>
<dbReference type="FunFam" id="3.30.300.20:FF:000001">
    <property type="entry name" value="30S ribosomal protein S3"/>
    <property type="match status" value="1"/>
</dbReference>
<dbReference type="Gene3D" id="3.30.300.20">
    <property type="match status" value="1"/>
</dbReference>
<dbReference type="Gene3D" id="3.30.1140.32">
    <property type="entry name" value="Ribosomal protein S3, C-terminal domain"/>
    <property type="match status" value="1"/>
</dbReference>
<dbReference type="HAMAP" id="MF_01309_B">
    <property type="entry name" value="Ribosomal_uS3_B"/>
    <property type="match status" value="1"/>
</dbReference>
<dbReference type="InterPro" id="IPR004087">
    <property type="entry name" value="KH_dom"/>
</dbReference>
<dbReference type="InterPro" id="IPR015946">
    <property type="entry name" value="KH_dom-like_a/b"/>
</dbReference>
<dbReference type="InterPro" id="IPR004044">
    <property type="entry name" value="KH_dom_type_2"/>
</dbReference>
<dbReference type="InterPro" id="IPR009019">
    <property type="entry name" value="KH_sf_prok-type"/>
</dbReference>
<dbReference type="InterPro" id="IPR036419">
    <property type="entry name" value="Ribosomal_S3_C_sf"/>
</dbReference>
<dbReference type="InterPro" id="IPR005704">
    <property type="entry name" value="Ribosomal_uS3_bac-typ"/>
</dbReference>
<dbReference type="InterPro" id="IPR001351">
    <property type="entry name" value="Ribosomal_uS3_C"/>
</dbReference>
<dbReference type="InterPro" id="IPR018280">
    <property type="entry name" value="Ribosomal_uS3_CS"/>
</dbReference>
<dbReference type="NCBIfam" id="TIGR01009">
    <property type="entry name" value="rpsC_bact"/>
    <property type="match status" value="1"/>
</dbReference>
<dbReference type="PANTHER" id="PTHR11760">
    <property type="entry name" value="30S/40S RIBOSOMAL PROTEIN S3"/>
    <property type="match status" value="1"/>
</dbReference>
<dbReference type="PANTHER" id="PTHR11760:SF19">
    <property type="entry name" value="SMALL RIBOSOMAL SUBUNIT PROTEIN US3C"/>
    <property type="match status" value="1"/>
</dbReference>
<dbReference type="Pfam" id="PF07650">
    <property type="entry name" value="KH_2"/>
    <property type="match status" value="1"/>
</dbReference>
<dbReference type="Pfam" id="PF00189">
    <property type="entry name" value="Ribosomal_S3_C"/>
    <property type="match status" value="1"/>
</dbReference>
<dbReference type="SMART" id="SM00322">
    <property type="entry name" value="KH"/>
    <property type="match status" value="1"/>
</dbReference>
<dbReference type="SUPFAM" id="SSF54814">
    <property type="entry name" value="Prokaryotic type KH domain (KH-domain type II)"/>
    <property type="match status" value="1"/>
</dbReference>
<dbReference type="SUPFAM" id="SSF54821">
    <property type="entry name" value="Ribosomal protein S3 C-terminal domain"/>
    <property type="match status" value="1"/>
</dbReference>
<dbReference type="PROSITE" id="PS50823">
    <property type="entry name" value="KH_TYPE_2"/>
    <property type="match status" value="1"/>
</dbReference>
<dbReference type="PROSITE" id="PS00548">
    <property type="entry name" value="RIBOSOMAL_S3"/>
    <property type="match status" value="1"/>
</dbReference>
<reference key="1">
    <citation type="submission" date="2006-08" db="EMBL/GenBank/DDBJ databases">
        <title>Complete sequence of chromosome 1 of Burkholderia cepacia AMMD.</title>
        <authorList>
            <person name="Copeland A."/>
            <person name="Lucas S."/>
            <person name="Lapidus A."/>
            <person name="Barry K."/>
            <person name="Detter J.C."/>
            <person name="Glavina del Rio T."/>
            <person name="Hammon N."/>
            <person name="Israni S."/>
            <person name="Pitluck S."/>
            <person name="Bruce D."/>
            <person name="Chain P."/>
            <person name="Malfatti S."/>
            <person name="Shin M."/>
            <person name="Vergez L."/>
            <person name="Schmutz J."/>
            <person name="Larimer F."/>
            <person name="Land M."/>
            <person name="Hauser L."/>
            <person name="Kyrpides N."/>
            <person name="Kim E."/>
            <person name="Parke J."/>
            <person name="Coenye T."/>
            <person name="Konstantinidis K."/>
            <person name="Ramette A."/>
            <person name="Tiedje J."/>
            <person name="Richardson P."/>
        </authorList>
    </citation>
    <scope>NUCLEOTIDE SEQUENCE [LARGE SCALE GENOMIC DNA]</scope>
    <source>
        <strain>ATCC BAA-244 / DSM 16087 / CCUG 44356 / LMG 19182 / AMMD</strain>
    </source>
</reference>
<protein>
    <recommendedName>
        <fullName evidence="1">Small ribosomal subunit protein uS3</fullName>
    </recommendedName>
    <alternativeName>
        <fullName evidence="3">30S ribosomal protein S3</fullName>
    </alternativeName>
</protein>
<gene>
    <name evidence="1" type="primary">rpsC</name>
    <name type="ordered locus">Bamb_0273</name>
</gene>
<feature type="chain" id="PRO_0000293764" description="Small ribosomal subunit protein uS3">
    <location>
        <begin position="1"/>
        <end position="266"/>
    </location>
</feature>
<feature type="domain" description="KH type-2" evidence="1">
    <location>
        <begin position="39"/>
        <end position="107"/>
    </location>
</feature>
<feature type="region of interest" description="Disordered" evidence="2">
    <location>
        <begin position="218"/>
        <end position="266"/>
    </location>
</feature>
<feature type="compositionally biased region" description="Basic and acidic residues" evidence="2">
    <location>
        <begin position="230"/>
        <end position="241"/>
    </location>
</feature>
<feature type="compositionally biased region" description="Basic and acidic residues" evidence="2">
    <location>
        <begin position="257"/>
        <end position="266"/>
    </location>
</feature>
<keyword id="KW-0687">Ribonucleoprotein</keyword>
<keyword id="KW-0689">Ribosomal protein</keyword>
<keyword id="KW-0694">RNA-binding</keyword>
<keyword id="KW-0699">rRNA-binding</keyword>
<name>RS3_BURCM</name>
<accession>Q0BJ40</accession>
<organism>
    <name type="scientific">Burkholderia ambifaria (strain ATCC BAA-244 / DSM 16087 / CCUG 44356 / LMG 19182 / AMMD)</name>
    <name type="common">Burkholderia cepacia (strain AMMD)</name>
    <dbReference type="NCBI Taxonomy" id="339670"/>
    <lineage>
        <taxon>Bacteria</taxon>
        <taxon>Pseudomonadati</taxon>
        <taxon>Pseudomonadota</taxon>
        <taxon>Betaproteobacteria</taxon>
        <taxon>Burkholderiales</taxon>
        <taxon>Burkholderiaceae</taxon>
        <taxon>Burkholderia</taxon>
        <taxon>Burkholderia cepacia complex</taxon>
    </lineage>
</organism>
<sequence length="266" mass="29934">MGQKIHPTGFRLAVSRNWASRWYANNNNFAAMLQEDIGVREYLKKKLKNASVGRVVIERPAKNARITIYSSRPGVVIGKKGEDIEQLKTELQRRMGVPVHVNIEEIRKPETDAQLIADSITQQLERRIMFRRAMKRAMQNAMRLGAQGIKIMSAGRLNGIEIARTEWYREGRVPLHTLRADIDYATSEAKTTYGIIGVKVWVYKGDTLGRNDAPVVEEVAEDKRPRRNARPGDRRPRRDGEGGAPGARRGAPRRGAGKPEDGKTGE</sequence>
<proteinExistence type="inferred from homology"/>
<comment type="function">
    <text evidence="1">Binds the lower part of the 30S subunit head. Binds mRNA in the 70S ribosome, positioning it for translation.</text>
</comment>
<comment type="subunit">
    <text evidence="1">Part of the 30S ribosomal subunit. Forms a tight complex with proteins S10 and S14.</text>
</comment>
<comment type="similarity">
    <text evidence="1">Belongs to the universal ribosomal protein uS3 family.</text>
</comment>